<feature type="chain" id="PRO_1000196874" description="Thiazole synthase">
    <location>
        <begin position="1"/>
        <end position="265"/>
    </location>
</feature>
<feature type="region of interest" description="Disordered" evidence="2">
    <location>
        <begin position="245"/>
        <end position="265"/>
    </location>
</feature>
<feature type="active site" description="Schiff-base intermediate with DXP" evidence="1">
    <location>
        <position position="106"/>
    </location>
</feature>
<feature type="binding site" evidence="1">
    <location>
        <position position="167"/>
    </location>
    <ligand>
        <name>1-deoxy-D-xylulose 5-phosphate</name>
        <dbReference type="ChEBI" id="CHEBI:57792"/>
    </ligand>
</feature>
<feature type="binding site" evidence="1">
    <location>
        <begin position="193"/>
        <end position="194"/>
    </location>
    <ligand>
        <name>1-deoxy-D-xylulose 5-phosphate</name>
        <dbReference type="ChEBI" id="CHEBI:57792"/>
    </ligand>
</feature>
<feature type="binding site" evidence="1">
    <location>
        <begin position="215"/>
        <end position="216"/>
    </location>
    <ligand>
        <name>1-deoxy-D-xylulose 5-phosphate</name>
        <dbReference type="ChEBI" id="CHEBI:57792"/>
    </ligand>
</feature>
<accession>B0UHP4</accession>
<comment type="function">
    <text evidence="1">Catalyzes the rearrangement of 1-deoxy-D-xylulose 5-phosphate (DXP) to produce the thiazole phosphate moiety of thiamine. Sulfur is provided by the thiocarboxylate moiety of the carrier protein ThiS. In vitro, sulfur can be provided by H(2)S.</text>
</comment>
<comment type="catalytic activity">
    <reaction evidence="1">
        <text>[ThiS sulfur-carrier protein]-C-terminal-Gly-aminoethanethioate + 2-iminoacetate + 1-deoxy-D-xylulose 5-phosphate = [ThiS sulfur-carrier protein]-C-terminal Gly-Gly + 2-[(2R,5Z)-2-carboxy-4-methylthiazol-5(2H)-ylidene]ethyl phosphate + 2 H2O + H(+)</text>
        <dbReference type="Rhea" id="RHEA:26297"/>
        <dbReference type="Rhea" id="RHEA-COMP:12909"/>
        <dbReference type="Rhea" id="RHEA-COMP:19908"/>
        <dbReference type="ChEBI" id="CHEBI:15377"/>
        <dbReference type="ChEBI" id="CHEBI:15378"/>
        <dbReference type="ChEBI" id="CHEBI:57792"/>
        <dbReference type="ChEBI" id="CHEBI:62899"/>
        <dbReference type="ChEBI" id="CHEBI:77846"/>
        <dbReference type="ChEBI" id="CHEBI:90778"/>
        <dbReference type="ChEBI" id="CHEBI:232372"/>
        <dbReference type="EC" id="2.8.1.10"/>
    </reaction>
</comment>
<comment type="pathway">
    <text evidence="1">Cofactor biosynthesis; thiamine diphosphate biosynthesis.</text>
</comment>
<comment type="subunit">
    <text evidence="1">Homotetramer. Forms heterodimers with either ThiH or ThiS.</text>
</comment>
<comment type="subcellular location">
    <subcellularLocation>
        <location evidence="1">Cytoplasm</location>
    </subcellularLocation>
</comment>
<comment type="similarity">
    <text evidence="1">Belongs to the ThiG family.</text>
</comment>
<proteinExistence type="inferred from homology"/>
<reference key="1">
    <citation type="submission" date="2008-02" db="EMBL/GenBank/DDBJ databases">
        <title>Complete sequence of chromosome of Methylobacterium sp. 4-46.</title>
        <authorList>
            <consortium name="US DOE Joint Genome Institute"/>
            <person name="Copeland A."/>
            <person name="Lucas S."/>
            <person name="Lapidus A."/>
            <person name="Glavina del Rio T."/>
            <person name="Dalin E."/>
            <person name="Tice H."/>
            <person name="Bruce D."/>
            <person name="Goodwin L."/>
            <person name="Pitluck S."/>
            <person name="Chertkov O."/>
            <person name="Brettin T."/>
            <person name="Detter J.C."/>
            <person name="Han C."/>
            <person name="Kuske C.R."/>
            <person name="Schmutz J."/>
            <person name="Larimer F."/>
            <person name="Land M."/>
            <person name="Hauser L."/>
            <person name="Kyrpides N."/>
            <person name="Ivanova N."/>
            <person name="Marx C.J."/>
            <person name="Richardson P."/>
        </authorList>
    </citation>
    <scope>NUCLEOTIDE SEQUENCE [LARGE SCALE GENOMIC DNA]</scope>
    <source>
        <strain>4-46</strain>
    </source>
</reference>
<name>THIG_METS4</name>
<dbReference type="EC" id="2.8.1.10" evidence="1"/>
<dbReference type="EMBL" id="CP000943">
    <property type="protein sequence ID" value="ACA21014.1"/>
    <property type="molecule type" value="Genomic_DNA"/>
</dbReference>
<dbReference type="RefSeq" id="WP_012336388.1">
    <property type="nucleotide sequence ID" value="NC_010511.1"/>
</dbReference>
<dbReference type="SMR" id="B0UHP4"/>
<dbReference type="STRING" id="426117.M446_6769"/>
<dbReference type="KEGG" id="met:M446_6769"/>
<dbReference type="eggNOG" id="COG2022">
    <property type="taxonomic scope" value="Bacteria"/>
</dbReference>
<dbReference type="HOGENOM" id="CLU_062233_1_0_5"/>
<dbReference type="UniPathway" id="UPA00060"/>
<dbReference type="GO" id="GO:0005737">
    <property type="term" value="C:cytoplasm"/>
    <property type="evidence" value="ECO:0007669"/>
    <property type="project" value="UniProtKB-SubCell"/>
</dbReference>
<dbReference type="GO" id="GO:1990107">
    <property type="term" value="F:thiazole synthase activity"/>
    <property type="evidence" value="ECO:0007669"/>
    <property type="project" value="UniProtKB-EC"/>
</dbReference>
<dbReference type="GO" id="GO:0009229">
    <property type="term" value="P:thiamine diphosphate biosynthetic process"/>
    <property type="evidence" value="ECO:0007669"/>
    <property type="project" value="UniProtKB-UniRule"/>
</dbReference>
<dbReference type="CDD" id="cd04728">
    <property type="entry name" value="ThiG"/>
    <property type="match status" value="1"/>
</dbReference>
<dbReference type="Gene3D" id="3.20.20.70">
    <property type="entry name" value="Aldolase class I"/>
    <property type="match status" value="1"/>
</dbReference>
<dbReference type="HAMAP" id="MF_00443">
    <property type="entry name" value="ThiG"/>
    <property type="match status" value="1"/>
</dbReference>
<dbReference type="InterPro" id="IPR013785">
    <property type="entry name" value="Aldolase_TIM"/>
</dbReference>
<dbReference type="InterPro" id="IPR033983">
    <property type="entry name" value="Thiazole_synthase_ThiG"/>
</dbReference>
<dbReference type="InterPro" id="IPR008867">
    <property type="entry name" value="ThiG"/>
</dbReference>
<dbReference type="PANTHER" id="PTHR34266">
    <property type="entry name" value="THIAZOLE SYNTHASE"/>
    <property type="match status" value="1"/>
</dbReference>
<dbReference type="PANTHER" id="PTHR34266:SF2">
    <property type="entry name" value="THIAZOLE SYNTHASE"/>
    <property type="match status" value="1"/>
</dbReference>
<dbReference type="Pfam" id="PF05690">
    <property type="entry name" value="ThiG"/>
    <property type="match status" value="1"/>
</dbReference>
<dbReference type="SUPFAM" id="SSF110399">
    <property type="entry name" value="ThiG-like"/>
    <property type="match status" value="1"/>
</dbReference>
<sequence length="265" mass="27297">MTTPTPLAPDGDDPLVIAGTPLRSRLLIGTAGYPTQAIMAEAVRASGAEIATVSIRRVSLRGHGSDTVSLLAGHRFLPNTAGCETARDAVMTAELAREALGTAWIKVEVIGDRETLYPDVAETLEATRQLVDAGFVVLPYCNDDPVVCARLADLGAAAVMPMGSLIGSGMGVANPANLELICRRSPVPVIVDAGIGTASDAVIAMELGAAAVLLNTAVAKADDPVRMARAMRHAVEAGRLAHGAGRIPRRARAEPSSPQLGLVGS</sequence>
<protein>
    <recommendedName>
        <fullName evidence="1">Thiazole synthase</fullName>
        <ecNumber evidence="1">2.8.1.10</ecNumber>
    </recommendedName>
</protein>
<evidence type="ECO:0000255" key="1">
    <source>
        <dbReference type="HAMAP-Rule" id="MF_00443"/>
    </source>
</evidence>
<evidence type="ECO:0000256" key="2">
    <source>
        <dbReference type="SAM" id="MobiDB-lite"/>
    </source>
</evidence>
<keyword id="KW-0963">Cytoplasm</keyword>
<keyword id="KW-0704">Schiff base</keyword>
<keyword id="KW-0784">Thiamine biosynthesis</keyword>
<keyword id="KW-0808">Transferase</keyword>
<organism>
    <name type="scientific">Methylobacterium sp. (strain 4-46)</name>
    <dbReference type="NCBI Taxonomy" id="426117"/>
    <lineage>
        <taxon>Bacteria</taxon>
        <taxon>Pseudomonadati</taxon>
        <taxon>Pseudomonadota</taxon>
        <taxon>Alphaproteobacteria</taxon>
        <taxon>Hyphomicrobiales</taxon>
        <taxon>Methylobacteriaceae</taxon>
        <taxon>Methylobacterium</taxon>
    </lineage>
</organism>
<gene>
    <name evidence="1" type="primary">thiG</name>
    <name type="ordered locus">M446_6769</name>
</gene>